<sequence length="396" mass="41763">MTGFFTILSFSLAALSVTNAAQILSVPKGAEVVPNGYIVVMKDDTSQQDFSSHRVWISSIHHNMTRRGLDGAGVKQTYDFDHLRGYSGIFDEDTIKDISNDPKVAFVEPDAIISQHVVVQQRKAPWGLSRLSNRRGGRNYVFDSSAGSGVWAYVVDSGVDVRHAEFQGRAVWGSNLVDNKNSDGTGHGTHVAGTIAGKTYGIAKKAKVVAVKVLNSEGKGPTSGIIAGINWSIRHARKHGMLQKSVLNMSLGGTYSAGLNHATAQAIKAGMFVSVSAGNDNINSNGNSPASERSVCTIAASTENDGKASFSNWGPAVDLYAPGHNILSARPGGGSQTMSGTSMAAPHAAGVAAYLIAKEGIPGNRACLRLKQLSQPTIRNPGPDTTSRLLYNGSGR</sequence>
<feature type="signal peptide" evidence="2">
    <location>
        <begin position="1"/>
        <end position="20"/>
    </location>
</feature>
<feature type="propeptide" id="PRO_0000397796" evidence="1">
    <location>
        <begin position="21"/>
        <end position="116"/>
    </location>
</feature>
<feature type="chain" id="PRO_0000397797" description="Subtilisin-like protease 5">
    <location>
        <begin position="117"/>
        <end position="396"/>
    </location>
</feature>
<feature type="domain" description="Inhibitor I9" evidence="2">
    <location>
        <begin position="37"/>
        <end position="113"/>
    </location>
</feature>
<feature type="domain" description="Peptidase S8" evidence="3">
    <location>
        <begin position="125"/>
        <end position="396"/>
    </location>
</feature>
<feature type="region of interest" description="Disordered" evidence="4">
    <location>
        <begin position="376"/>
        <end position="396"/>
    </location>
</feature>
<feature type="compositionally biased region" description="Polar residues" evidence="4">
    <location>
        <begin position="376"/>
        <end position="389"/>
    </location>
</feature>
<feature type="active site" description="Charge relay system" evidence="3">
    <location>
        <position position="156"/>
    </location>
</feature>
<feature type="active site" description="Charge relay system" evidence="3">
    <location>
        <position position="187"/>
    </location>
</feature>
<feature type="active site" description="Charge relay system" evidence="3">
    <location>
        <position position="342"/>
    </location>
</feature>
<feature type="glycosylation site" description="N-linked (GlcNAc...) asparagine" evidence="2">
    <location>
        <position position="230"/>
    </location>
</feature>
<feature type="glycosylation site" description="N-linked (GlcNAc...) asparagine" evidence="2">
    <location>
        <position position="248"/>
    </location>
</feature>
<feature type="glycosylation site" description="N-linked (GlcNAc...) asparagine" evidence="2">
    <location>
        <position position="392"/>
    </location>
</feature>
<comment type="function">
    <text evidence="1">Secreted subtilisin-like serine protease with keratinolytic activity that contributes to pathogenicity.</text>
</comment>
<comment type="subcellular location">
    <subcellularLocation>
        <location evidence="1">Secreted</location>
    </subcellularLocation>
</comment>
<comment type="similarity">
    <text evidence="5">Belongs to the peptidase S8 family.</text>
</comment>
<proteinExistence type="inferred from homology"/>
<name>SUB5_TRIVH</name>
<dbReference type="EC" id="3.4.21.-"/>
<dbReference type="EMBL" id="ACYE01000031">
    <property type="protein sequence ID" value="EFE44662.1"/>
    <property type="molecule type" value="Genomic_DNA"/>
</dbReference>
<dbReference type="RefSeq" id="XP_003025273.1">
    <property type="nucleotide sequence ID" value="XM_003025227.1"/>
</dbReference>
<dbReference type="SMR" id="D4D0F5"/>
<dbReference type="GlyCosmos" id="D4D0F5">
    <property type="glycosylation" value="3 sites, No reported glycans"/>
</dbReference>
<dbReference type="GeneID" id="9582890"/>
<dbReference type="KEGG" id="tve:TRV_00550"/>
<dbReference type="HOGENOM" id="CLU_011263_1_3_1"/>
<dbReference type="OrthoDB" id="3316at34384"/>
<dbReference type="Proteomes" id="UP000008383">
    <property type="component" value="Unassembled WGS sequence"/>
</dbReference>
<dbReference type="GO" id="GO:0005576">
    <property type="term" value="C:extracellular region"/>
    <property type="evidence" value="ECO:0007669"/>
    <property type="project" value="UniProtKB-SubCell"/>
</dbReference>
<dbReference type="GO" id="GO:0004252">
    <property type="term" value="F:serine-type endopeptidase activity"/>
    <property type="evidence" value="ECO:0007669"/>
    <property type="project" value="InterPro"/>
</dbReference>
<dbReference type="GO" id="GO:0006508">
    <property type="term" value="P:proteolysis"/>
    <property type="evidence" value="ECO:0007669"/>
    <property type="project" value="UniProtKB-KW"/>
</dbReference>
<dbReference type="CDD" id="cd04077">
    <property type="entry name" value="Peptidases_S8_PCSK9_ProteinaseK_like"/>
    <property type="match status" value="1"/>
</dbReference>
<dbReference type="FunFam" id="3.40.50.200:FF:000014">
    <property type="entry name" value="Proteinase K"/>
    <property type="match status" value="1"/>
</dbReference>
<dbReference type="Gene3D" id="3.30.70.80">
    <property type="entry name" value="Peptidase S8 propeptide/proteinase inhibitor I9"/>
    <property type="match status" value="1"/>
</dbReference>
<dbReference type="Gene3D" id="3.40.50.200">
    <property type="entry name" value="Peptidase S8/S53 domain"/>
    <property type="match status" value="1"/>
</dbReference>
<dbReference type="InterPro" id="IPR034193">
    <property type="entry name" value="PCSK9_ProteinaseK-like"/>
</dbReference>
<dbReference type="InterPro" id="IPR000209">
    <property type="entry name" value="Peptidase_S8/S53_dom"/>
</dbReference>
<dbReference type="InterPro" id="IPR036852">
    <property type="entry name" value="Peptidase_S8/S53_dom_sf"/>
</dbReference>
<dbReference type="InterPro" id="IPR023827">
    <property type="entry name" value="Peptidase_S8_Asp-AS"/>
</dbReference>
<dbReference type="InterPro" id="IPR022398">
    <property type="entry name" value="Peptidase_S8_His-AS"/>
</dbReference>
<dbReference type="InterPro" id="IPR023828">
    <property type="entry name" value="Peptidase_S8_Ser-AS"/>
</dbReference>
<dbReference type="InterPro" id="IPR050131">
    <property type="entry name" value="Peptidase_S8_subtilisin-like"/>
</dbReference>
<dbReference type="InterPro" id="IPR015500">
    <property type="entry name" value="Peptidase_S8_subtilisin-rel"/>
</dbReference>
<dbReference type="InterPro" id="IPR010259">
    <property type="entry name" value="S8pro/Inhibitor_I9"/>
</dbReference>
<dbReference type="InterPro" id="IPR037045">
    <property type="entry name" value="S8pro/Inhibitor_I9_sf"/>
</dbReference>
<dbReference type="PANTHER" id="PTHR43806:SF58">
    <property type="entry name" value="ALKALINE PROTEASE 1-RELATED"/>
    <property type="match status" value="1"/>
</dbReference>
<dbReference type="PANTHER" id="PTHR43806">
    <property type="entry name" value="PEPTIDASE S8"/>
    <property type="match status" value="1"/>
</dbReference>
<dbReference type="Pfam" id="PF05922">
    <property type="entry name" value="Inhibitor_I9"/>
    <property type="match status" value="1"/>
</dbReference>
<dbReference type="Pfam" id="PF00082">
    <property type="entry name" value="Peptidase_S8"/>
    <property type="match status" value="1"/>
</dbReference>
<dbReference type="PRINTS" id="PR00723">
    <property type="entry name" value="SUBTILISIN"/>
</dbReference>
<dbReference type="SUPFAM" id="SSF54897">
    <property type="entry name" value="Protease propeptides/inhibitors"/>
    <property type="match status" value="1"/>
</dbReference>
<dbReference type="SUPFAM" id="SSF52743">
    <property type="entry name" value="Subtilisin-like"/>
    <property type="match status" value="1"/>
</dbReference>
<dbReference type="PROSITE" id="PS51892">
    <property type="entry name" value="SUBTILASE"/>
    <property type="match status" value="1"/>
</dbReference>
<dbReference type="PROSITE" id="PS00136">
    <property type="entry name" value="SUBTILASE_ASP"/>
    <property type="match status" value="1"/>
</dbReference>
<dbReference type="PROSITE" id="PS00137">
    <property type="entry name" value="SUBTILASE_HIS"/>
    <property type="match status" value="1"/>
</dbReference>
<dbReference type="PROSITE" id="PS00138">
    <property type="entry name" value="SUBTILASE_SER"/>
    <property type="match status" value="1"/>
</dbReference>
<gene>
    <name type="primary">SUB5</name>
    <name type="ORF">TRV_00550</name>
</gene>
<keyword id="KW-0325">Glycoprotein</keyword>
<keyword id="KW-0378">Hydrolase</keyword>
<keyword id="KW-0645">Protease</keyword>
<keyword id="KW-0964">Secreted</keyword>
<keyword id="KW-0720">Serine protease</keyword>
<keyword id="KW-0732">Signal</keyword>
<keyword id="KW-0843">Virulence</keyword>
<keyword id="KW-0865">Zymogen</keyword>
<protein>
    <recommendedName>
        <fullName>Subtilisin-like protease 5</fullName>
        <ecNumber>3.4.21.-</ecNumber>
    </recommendedName>
</protein>
<accession>D4D0F5</accession>
<reference key="1">
    <citation type="journal article" date="2011" name="Genome Biol.">
        <title>Comparative and functional genomics provide insights into the pathogenicity of dermatophytic fungi.</title>
        <authorList>
            <person name="Burmester A."/>
            <person name="Shelest E."/>
            <person name="Gloeckner G."/>
            <person name="Heddergott C."/>
            <person name="Schindler S."/>
            <person name="Staib P."/>
            <person name="Heidel A."/>
            <person name="Felder M."/>
            <person name="Petzold A."/>
            <person name="Szafranski K."/>
            <person name="Feuermann M."/>
            <person name="Pedruzzi I."/>
            <person name="Priebe S."/>
            <person name="Groth M."/>
            <person name="Winkler R."/>
            <person name="Li W."/>
            <person name="Kniemeyer O."/>
            <person name="Schroeckh V."/>
            <person name="Hertweck C."/>
            <person name="Hube B."/>
            <person name="White T.C."/>
            <person name="Platzer M."/>
            <person name="Guthke R."/>
            <person name="Heitman J."/>
            <person name="Woestemeyer J."/>
            <person name="Zipfel P.F."/>
            <person name="Monod M."/>
            <person name="Brakhage A.A."/>
        </authorList>
    </citation>
    <scope>NUCLEOTIDE SEQUENCE [LARGE SCALE GENOMIC DNA]</scope>
    <source>
        <strain>HKI 0517</strain>
    </source>
</reference>
<evidence type="ECO:0000250" key="1"/>
<evidence type="ECO:0000255" key="2"/>
<evidence type="ECO:0000255" key="3">
    <source>
        <dbReference type="PROSITE-ProRule" id="PRU01240"/>
    </source>
</evidence>
<evidence type="ECO:0000256" key="4">
    <source>
        <dbReference type="SAM" id="MobiDB-lite"/>
    </source>
</evidence>
<evidence type="ECO:0000305" key="5"/>
<organism>
    <name type="scientific">Trichophyton verrucosum (strain HKI 0517)</name>
    <dbReference type="NCBI Taxonomy" id="663202"/>
    <lineage>
        <taxon>Eukaryota</taxon>
        <taxon>Fungi</taxon>
        <taxon>Dikarya</taxon>
        <taxon>Ascomycota</taxon>
        <taxon>Pezizomycotina</taxon>
        <taxon>Eurotiomycetes</taxon>
        <taxon>Eurotiomycetidae</taxon>
        <taxon>Onygenales</taxon>
        <taxon>Arthrodermataceae</taxon>
        <taxon>Trichophyton</taxon>
    </lineage>
</organism>